<sequence length="542" mass="59260">MSYGGGYGSSRDHYGGGGGGGYSRGGGYGNGYGNSNGYSHGHSSGGYGSYGGAGGYGGGTGGDRMSNLGAGLKTQNWDLSTMPKFEKSFYKEHPNVSQRSTHEVDAFRKEHEITVQGKNVPRPVETFDEAGFPQYVMSEVKAQGFARPTAIQAQGWPMALSGRDVVGIAETGSGKTLTYCLPAIVHINAQPLLAPGDGPIVLVLAPTRELAVQIQTEITKFGKSSRIRNTCVYGGVPKGPQIRDLTRGVEVCIATPGRLIDMLEAGKTNLRRVTYLVLDEADRMLDMGFEPQIRKIVSQIRPDRQTCMWSATWPKDVRQLAQDFLHDYIQVNIGSMDLSANHRITQIVEIVSEFEKRDRMAKHLDRIMEANKHSKVLIFTGTKRVADDITRFLRQDGWPALSIHGDKQQNERDWVLNEFKTGKSPIMVATDVASRGIDVRDITHVLNYDYPNNSEDYVHRIGRTGRAGAKGTAITLFTTDNAKQARDLVAILSESKQQIDPRLAEMARYGSGGGGNRWGGRGRGRGGFTASNAAPLGNNRRW</sequence>
<name>DBP2_AJECN</name>
<evidence type="ECO:0000250" key="1"/>
<evidence type="ECO:0000255" key="2">
    <source>
        <dbReference type="PROSITE-ProRule" id="PRU00541"/>
    </source>
</evidence>
<evidence type="ECO:0000255" key="3">
    <source>
        <dbReference type="PROSITE-ProRule" id="PRU00542"/>
    </source>
</evidence>
<evidence type="ECO:0000256" key="4">
    <source>
        <dbReference type="SAM" id="MobiDB-lite"/>
    </source>
</evidence>
<evidence type="ECO:0000305" key="5"/>
<proteinExistence type="inferred from homology"/>
<comment type="function">
    <text evidence="1">ATP-dependent RNA helicase involved nonsense-mediated mRNA decay and ribosome biogenesis through rRNA processing.</text>
</comment>
<comment type="catalytic activity">
    <reaction>
        <text>ATP + H2O = ADP + phosphate + H(+)</text>
        <dbReference type="Rhea" id="RHEA:13065"/>
        <dbReference type="ChEBI" id="CHEBI:15377"/>
        <dbReference type="ChEBI" id="CHEBI:15378"/>
        <dbReference type="ChEBI" id="CHEBI:30616"/>
        <dbReference type="ChEBI" id="CHEBI:43474"/>
        <dbReference type="ChEBI" id="CHEBI:456216"/>
        <dbReference type="EC" id="3.6.4.13"/>
    </reaction>
</comment>
<comment type="subunit">
    <text evidence="1">Associates with polysomes.</text>
</comment>
<comment type="subcellular location">
    <subcellularLocation>
        <location evidence="1">Cytoplasm</location>
    </subcellularLocation>
    <subcellularLocation>
        <location evidence="1">Nucleus</location>
    </subcellularLocation>
</comment>
<comment type="domain">
    <text>The Q motif is unique to and characteristic of the DEAD box family of RNA helicases and controls ATP binding and hydrolysis.</text>
</comment>
<comment type="similarity">
    <text evidence="5">Belongs to the DEAD box helicase family. DDX5/DBP2 subfamily.</text>
</comment>
<feature type="chain" id="PRO_0000310186" description="ATP-dependent RNA helicase DBP2">
    <location>
        <begin position="1"/>
        <end position="542"/>
    </location>
</feature>
<feature type="domain" description="Helicase ATP-binding" evidence="2">
    <location>
        <begin position="156"/>
        <end position="331"/>
    </location>
</feature>
<feature type="domain" description="Helicase C-terminal" evidence="3">
    <location>
        <begin position="346"/>
        <end position="507"/>
    </location>
</feature>
<feature type="region of interest" description="Disordered" evidence="4">
    <location>
        <begin position="514"/>
        <end position="542"/>
    </location>
</feature>
<feature type="short sequence motif" description="Q motif">
    <location>
        <begin position="125"/>
        <end position="153"/>
    </location>
</feature>
<feature type="short sequence motif" description="DEAD box">
    <location>
        <begin position="279"/>
        <end position="282"/>
    </location>
</feature>
<feature type="compositionally biased region" description="Gly residues" evidence="4">
    <location>
        <begin position="514"/>
        <end position="527"/>
    </location>
</feature>
<feature type="binding site" evidence="2">
    <location>
        <begin position="169"/>
        <end position="176"/>
    </location>
    <ligand>
        <name>ATP</name>
        <dbReference type="ChEBI" id="CHEBI:30616"/>
    </ligand>
</feature>
<dbReference type="EC" id="3.6.4.13"/>
<dbReference type="EMBL" id="CH476666">
    <property type="protein sequence ID" value="EDN05055.1"/>
    <property type="molecule type" value="Genomic_DNA"/>
</dbReference>
<dbReference type="SMR" id="A6RGE3"/>
<dbReference type="STRING" id="339724.A6RGE3"/>
<dbReference type="KEGG" id="aje:HCAG_08709"/>
<dbReference type="VEuPathDB" id="FungiDB:HCAG_08709"/>
<dbReference type="HOGENOM" id="CLU_003041_16_9_1"/>
<dbReference type="OMA" id="STMPKFE"/>
<dbReference type="OrthoDB" id="8996at299071"/>
<dbReference type="Proteomes" id="UP000009297">
    <property type="component" value="Unassembled WGS sequence"/>
</dbReference>
<dbReference type="GO" id="GO:0005737">
    <property type="term" value="C:cytoplasm"/>
    <property type="evidence" value="ECO:0007669"/>
    <property type="project" value="UniProtKB-SubCell"/>
</dbReference>
<dbReference type="GO" id="GO:0005634">
    <property type="term" value="C:nucleus"/>
    <property type="evidence" value="ECO:0007669"/>
    <property type="project" value="UniProtKB-SubCell"/>
</dbReference>
<dbReference type="GO" id="GO:0005524">
    <property type="term" value="F:ATP binding"/>
    <property type="evidence" value="ECO:0007669"/>
    <property type="project" value="UniProtKB-KW"/>
</dbReference>
<dbReference type="GO" id="GO:0016887">
    <property type="term" value="F:ATP hydrolysis activity"/>
    <property type="evidence" value="ECO:0007669"/>
    <property type="project" value="RHEA"/>
</dbReference>
<dbReference type="GO" id="GO:0003723">
    <property type="term" value="F:RNA binding"/>
    <property type="evidence" value="ECO:0007669"/>
    <property type="project" value="UniProtKB-KW"/>
</dbReference>
<dbReference type="GO" id="GO:0003724">
    <property type="term" value="F:RNA helicase activity"/>
    <property type="evidence" value="ECO:0007669"/>
    <property type="project" value="UniProtKB-EC"/>
</dbReference>
<dbReference type="GO" id="GO:0000184">
    <property type="term" value="P:nuclear-transcribed mRNA catabolic process, nonsense-mediated decay"/>
    <property type="evidence" value="ECO:0007669"/>
    <property type="project" value="UniProtKB-KW"/>
</dbReference>
<dbReference type="GO" id="GO:0006364">
    <property type="term" value="P:rRNA processing"/>
    <property type="evidence" value="ECO:0007669"/>
    <property type="project" value="UniProtKB-KW"/>
</dbReference>
<dbReference type="CDD" id="cd18787">
    <property type="entry name" value="SF2_C_DEAD"/>
    <property type="match status" value="1"/>
</dbReference>
<dbReference type="FunFam" id="3.40.50.300:FF:000008">
    <property type="entry name" value="ATP-dependent RNA helicase RhlB"/>
    <property type="match status" value="1"/>
</dbReference>
<dbReference type="FunFam" id="3.40.50.300:FF:000079">
    <property type="entry name" value="probable ATP-dependent RNA helicase DDX17"/>
    <property type="match status" value="1"/>
</dbReference>
<dbReference type="Gene3D" id="3.40.50.300">
    <property type="entry name" value="P-loop containing nucleotide triphosphate hydrolases"/>
    <property type="match status" value="2"/>
</dbReference>
<dbReference type="InterPro" id="IPR011545">
    <property type="entry name" value="DEAD/DEAH_box_helicase_dom"/>
</dbReference>
<dbReference type="InterPro" id="IPR014001">
    <property type="entry name" value="Helicase_ATP-bd"/>
</dbReference>
<dbReference type="InterPro" id="IPR001650">
    <property type="entry name" value="Helicase_C-like"/>
</dbReference>
<dbReference type="InterPro" id="IPR027417">
    <property type="entry name" value="P-loop_NTPase"/>
</dbReference>
<dbReference type="InterPro" id="IPR000629">
    <property type="entry name" value="RNA-helicase_DEAD-box_CS"/>
</dbReference>
<dbReference type="InterPro" id="IPR014014">
    <property type="entry name" value="RNA_helicase_DEAD_Q_motif"/>
</dbReference>
<dbReference type="PANTHER" id="PTHR47958">
    <property type="entry name" value="ATP-DEPENDENT RNA HELICASE DBP3"/>
    <property type="match status" value="1"/>
</dbReference>
<dbReference type="Pfam" id="PF00270">
    <property type="entry name" value="DEAD"/>
    <property type="match status" value="1"/>
</dbReference>
<dbReference type="Pfam" id="PF00271">
    <property type="entry name" value="Helicase_C"/>
    <property type="match status" value="1"/>
</dbReference>
<dbReference type="SMART" id="SM00487">
    <property type="entry name" value="DEXDc"/>
    <property type="match status" value="1"/>
</dbReference>
<dbReference type="SMART" id="SM00490">
    <property type="entry name" value="HELICc"/>
    <property type="match status" value="1"/>
</dbReference>
<dbReference type="SUPFAM" id="SSF52540">
    <property type="entry name" value="P-loop containing nucleoside triphosphate hydrolases"/>
    <property type="match status" value="1"/>
</dbReference>
<dbReference type="PROSITE" id="PS00039">
    <property type="entry name" value="DEAD_ATP_HELICASE"/>
    <property type="match status" value="1"/>
</dbReference>
<dbReference type="PROSITE" id="PS51192">
    <property type="entry name" value="HELICASE_ATP_BIND_1"/>
    <property type="match status" value="1"/>
</dbReference>
<dbReference type="PROSITE" id="PS51194">
    <property type="entry name" value="HELICASE_CTER"/>
    <property type="match status" value="1"/>
</dbReference>
<dbReference type="PROSITE" id="PS51195">
    <property type="entry name" value="Q_MOTIF"/>
    <property type="match status" value="1"/>
</dbReference>
<protein>
    <recommendedName>
        <fullName>ATP-dependent RNA helicase DBP2</fullName>
        <ecNumber>3.6.4.13</ecNumber>
    </recommendedName>
</protein>
<reference key="1">
    <citation type="journal article" date="2009" name="Genome Res.">
        <title>Comparative genomic analyses of the human fungal pathogens Coccidioides and their relatives.</title>
        <authorList>
            <person name="Sharpton T.J."/>
            <person name="Stajich J.E."/>
            <person name="Rounsley S.D."/>
            <person name="Gardner M.J."/>
            <person name="Wortman J.R."/>
            <person name="Jordar V.S."/>
            <person name="Maiti R."/>
            <person name="Kodira C.D."/>
            <person name="Neafsey D.E."/>
            <person name="Zeng Q."/>
            <person name="Hung C.-Y."/>
            <person name="McMahan C."/>
            <person name="Muszewska A."/>
            <person name="Grynberg M."/>
            <person name="Mandel M.A."/>
            <person name="Kellner E.M."/>
            <person name="Barker B.M."/>
            <person name="Galgiani J.N."/>
            <person name="Orbach M.J."/>
            <person name="Kirkland T.N."/>
            <person name="Cole G.T."/>
            <person name="Henn M.R."/>
            <person name="Birren B.W."/>
            <person name="Taylor J.W."/>
        </authorList>
    </citation>
    <scope>NUCLEOTIDE SEQUENCE [LARGE SCALE GENOMIC DNA]</scope>
    <source>
        <strain>NAm1 / WU24</strain>
    </source>
</reference>
<accession>A6RGE3</accession>
<keyword id="KW-0067">ATP-binding</keyword>
<keyword id="KW-0963">Cytoplasm</keyword>
<keyword id="KW-0347">Helicase</keyword>
<keyword id="KW-0378">Hydrolase</keyword>
<keyword id="KW-0866">Nonsense-mediated mRNA decay</keyword>
<keyword id="KW-0547">Nucleotide-binding</keyword>
<keyword id="KW-0539">Nucleus</keyword>
<keyword id="KW-1185">Reference proteome</keyword>
<keyword id="KW-0690">Ribosome biogenesis</keyword>
<keyword id="KW-0694">RNA-binding</keyword>
<keyword id="KW-0698">rRNA processing</keyword>
<gene>
    <name type="primary">DBP2</name>
    <name type="ORF">HCAG_08709</name>
</gene>
<organism>
    <name type="scientific">Ajellomyces capsulatus (strain NAm1 / WU24)</name>
    <name type="common">Darling's disease fungus</name>
    <name type="synonym">Histoplasma capsulatum</name>
    <dbReference type="NCBI Taxonomy" id="2059318"/>
    <lineage>
        <taxon>Eukaryota</taxon>
        <taxon>Fungi</taxon>
        <taxon>Dikarya</taxon>
        <taxon>Ascomycota</taxon>
        <taxon>Pezizomycotina</taxon>
        <taxon>Eurotiomycetes</taxon>
        <taxon>Eurotiomycetidae</taxon>
        <taxon>Onygenales</taxon>
        <taxon>Ajellomycetaceae</taxon>
        <taxon>Histoplasma</taxon>
    </lineage>
</organism>